<protein>
    <recommendedName>
        <fullName>Sperm protamine P1</fullName>
    </recommendedName>
</protein>
<proteinExistence type="evidence at transcript level"/>
<reference key="1">
    <citation type="journal article" date="1999" name="Mol. Phylogenet. Evol.">
        <title>Systematic relationships within the dasyurid marsupial tribe Sminthopsini -- a multigene approach.</title>
        <authorList>
            <person name="Blacket M.J."/>
            <person name="Krajewski C."/>
            <person name="Labrinidis A."/>
            <person name="Cambron B."/>
            <person name="Cooper S."/>
            <person name="Westerman M."/>
        </authorList>
    </citation>
    <scope>NUCLEOTIDE SEQUENCE [GENOMIC DNA]</scope>
</reference>
<name>HSP1_SMIVI</name>
<gene>
    <name type="primary">PRM1</name>
</gene>
<keyword id="KW-0158">Chromosome</keyword>
<keyword id="KW-0217">Developmental protein</keyword>
<keyword id="KW-0221">Differentiation</keyword>
<keyword id="KW-0226">DNA condensation</keyword>
<keyword id="KW-0238">DNA-binding</keyword>
<keyword id="KW-0544">Nucleosome core</keyword>
<keyword id="KW-0539">Nucleus</keyword>
<keyword id="KW-0744">Spermatogenesis</keyword>
<comment type="function">
    <text evidence="1">Protamines substitute for histones in the chromatin of sperm during the haploid phase of spermatogenesis. They compact sperm DNA into a highly condensed, stable and inactive complex (By similarity).</text>
</comment>
<comment type="subcellular location">
    <subcellularLocation>
        <location evidence="1">Nucleus</location>
    </subcellularLocation>
    <subcellularLocation>
        <location evidence="1">Chromosome</location>
    </subcellularLocation>
</comment>
<comment type="tissue specificity">
    <text>Testis.</text>
</comment>
<comment type="similarity">
    <text evidence="3">Belongs to the protamine P1 family.</text>
</comment>
<organism>
    <name type="scientific">Sminthopsis virginiae</name>
    <name type="common">Red-cheeked dunnart</name>
    <dbReference type="NCBI Taxonomy" id="90767"/>
    <lineage>
        <taxon>Eukaryota</taxon>
        <taxon>Metazoa</taxon>
        <taxon>Chordata</taxon>
        <taxon>Craniata</taxon>
        <taxon>Vertebrata</taxon>
        <taxon>Euteleostomi</taxon>
        <taxon>Mammalia</taxon>
        <taxon>Metatheria</taxon>
        <taxon>Dasyuromorphia</taxon>
        <taxon>Dasyuridae</taxon>
        <taxon>Sminthopsis</taxon>
    </lineage>
</organism>
<evidence type="ECO:0000250" key="1"/>
<evidence type="ECO:0000256" key="2">
    <source>
        <dbReference type="SAM" id="MobiDB-lite"/>
    </source>
</evidence>
<evidence type="ECO:0000305" key="3"/>
<feature type="chain" id="PRO_0000191574" description="Sperm protamine P1">
    <location>
        <begin position="1"/>
        <end position="63"/>
    </location>
</feature>
<feature type="region of interest" description="Disordered" evidence="2">
    <location>
        <begin position="1"/>
        <end position="63"/>
    </location>
</feature>
<sequence length="63" mass="8697">MARYRRHSRSRSRSRYRRRRRRRSRHHNRRRTYRRSRRHSRRRRGRRRGYSRRRYSRRGRRRY</sequence>
<accession>Q71UF9</accession>
<dbReference type="EMBL" id="AF089884">
    <property type="protein sequence ID" value="AAD55343.1"/>
    <property type="molecule type" value="Genomic_DNA"/>
</dbReference>
<dbReference type="GO" id="GO:0000786">
    <property type="term" value="C:nucleosome"/>
    <property type="evidence" value="ECO:0007669"/>
    <property type="project" value="UniProtKB-KW"/>
</dbReference>
<dbReference type="GO" id="GO:0005634">
    <property type="term" value="C:nucleus"/>
    <property type="evidence" value="ECO:0007669"/>
    <property type="project" value="UniProtKB-SubCell"/>
</dbReference>
<dbReference type="GO" id="GO:0003677">
    <property type="term" value="F:DNA binding"/>
    <property type="evidence" value="ECO:0007669"/>
    <property type="project" value="UniProtKB-KW"/>
</dbReference>
<dbReference type="GO" id="GO:0030261">
    <property type="term" value="P:chromosome condensation"/>
    <property type="evidence" value="ECO:0007669"/>
    <property type="project" value="UniProtKB-KW"/>
</dbReference>
<dbReference type="GO" id="GO:0035092">
    <property type="term" value="P:sperm DNA condensation"/>
    <property type="evidence" value="ECO:0007669"/>
    <property type="project" value="InterPro"/>
</dbReference>
<dbReference type="InterPro" id="IPR000221">
    <property type="entry name" value="Protamine_P1"/>
</dbReference>
<dbReference type="PROSITE" id="PS00048">
    <property type="entry name" value="PROTAMINE_P1"/>
    <property type="match status" value="1"/>
</dbReference>